<dbReference type="EMBL" id="AF247661">
    <property type="protein sequence ID" value="AAF72518.3"/>
    <property type="molecule type" value="mRNA"/>
</dbReference>
<dbReference type="EMBL" id="AF151077">
    <property type="protein sequence ID" value="AAF36163.1"/>
    <property type="molecule type" value="mRNA"/>
</dbReference>
<dbReference type="EMBL" id="AF151085">
    <property type="protein sequence ID" value="AAF36171.1"/>
    <property type="status" value="ALT_FRAME"/>
    <property type="molecule type" value="mRNA"/>
</dbReference>
<dbReference type="EMBL" id="AK001929">
    <property type="protein sequence ID" value="BAA91984.1"/>
    <property type="molecule type" value="mRNA"/>
</dbReference>
<dbReference type="EMBL" id="AK022506">
    <property type="protein sequence ID" value="BAB14066.1"/>
    <property type="molecule type" value="mRNA"/>
</dbReference>
<dbReference type="EMBL" id="AK024049">
    <property type="protein sequence ID" value="BAB14799.1"/>
    <property type="molecule type" value="mRNA"/>
</dbReference>
<dbReference type="EMBL" id="AK302248">
    <property type="protein sequence ID" value="BAG63600.1"/>
    <property type="molecule type" value="mRNA"/>
</dbReference>
<dbReference type="EMBL" id="AL451070">
    <property type="status" value="NOT_ANNOTATED_CDS"/>
    <property type="molecule type" value="Genomic_DNA"/>
</dbReference>
<dbReference type="EMBL" id="CH471059">
    <property type="protein sequence ID" value="EAX07620.1"/>
    <property type="molecule type" value="Genomic_DNA"/>
</dbReference>
<dbReference type="EMBL" id="CH471059">
    <property type="protein sequence ID" value="EAX07621.1"/>
    <property type="molecule type" value="Genomic_DNA"/>
</dbReference>
<dbReference type="EMBL" id="CH471059">
    <property type="protein sequence ID" value="EAX07622.1"/>
    <property type="molecule type" value="Genomic_DNA"/>
</dbReference>
<dbReference type="EMBL" id="CH471059">
    <property type="protein sequence ID" value="EAX07624.1"/>
    <property type="molecule type" value="Genomic_DNA"/>
</dbReference>
<dbReference type="EMBL" id="BC000685">
    <property type="protein sequence ID" value="AAH00685.1"/>
    <property type="molecule type" value="mRNA"/>
</dbReference>
<dbReference type="EMBL" id="BC007446">
    <property type="protein sequence ID" value="AAH07446.1"/>
    <property type="molecule type" value="mRNA"/>
</dbReference>
<dbReference type="EMBL" id="BC050609">
    <property type="protein sequence ID" value="AAH50609.1"/>
    <property type="molecule type" value="mRNA"/>
</dbReference>
<dbReference type="CCDS" id="CCDS341.1">
    <molecule id="Q9NP64-1"/>
</dbReference>
<dbReference type="CCDS" id="CCDS60061.1">
    <molecule id="Q9NP64-3"/>
</dbReference>
<dbReference type="RefSeq" id="NP_001269495.1">
    <property type="nucleotide sequence ID" value="NM_001282566.1"/>
</dbReference>
<dbReference type="RefSeq" id="NP_001269496.1">
    <property type="nucleotide sequence ID" value="NM_001282567.1"/>
</dbReference>
<dbReference type="RefSeq" id="NP_001269497.1">
    <molecule id="Q9NP64-1"/>
    <property type="nucleotide sequence ID" value="NM_001282568.2"/>
</dbReference>
<dbReference type="RefSeq" id="NP_001269498.1">
    <molecule id="Q9NP64-3"/>
    <property type="nucleotide sequence ID" value="NM_001282569.2"/>
</dbReference>
<dbReference type="RefSeq" id="NP_001269499.1">
    <molecule id="Q9NP64-2"/>
    <property type="nucleotide sequence ID" value="NM_001282570.2"/>
</dbReference>
<dbReference type="RefSeq" id="NP_001269500.1">
    <property type="nucleotide sequence ID" value="NM_001282571.1"/>
</dbReference>
<dbReference type="RefSeq" id="NP_001269501.1">
    <property type="nucleotide sequence ID" value="NM_001282572.1"/>
</dbReference>
<dbReference type="RefSeq" id="NP_001269502.1">
    <property type="nucleotide sequence ID" value="NM_001282573.1"/>
</dbReference>
<dbReference type="RefSeq" id="NP_001269503.1">
    <property type="nucleotide sequence ID" value="NM_001282574.1"/>
</dbReference>
<dbReference type="RefSeq" id="NP_057589.2">
    <molecule id="Q9NP64-1"/>
    <property type="nucleotide sequence ID" value="NM_016505.3"/>
</dbReference>
<dbReference type="RefSeq" id="XP_006710744.1">
    <property type="nucleotide sequence ID" value="XM_006710681.3"/>
</dbReference>
<dbReference type="RefSeq" id="XP_011539869.1">
    <property type="nucleotide sequence ID" value="XM_011541567.2"/>
</dbReference>
<dbReference type="RefSeq" id="XP_047278464.1">
    <molecule id="Q9NP64-1"/>
    <property type="nucleotide sequence ID" value="XM_047422508.1"/>
</dbReference>
<dbReference type="RefSeq" id="XP_054192951.1">
    <molecule id="Q9NP64-1"/>
    <property type="nucleotide sequence ID" value="XM_054336976.1"/>
</dbReference>
<dbReference type="PDB" id="2CQO">
    <property type="method" value="NMR"/>
    <property type="chains" value="A=1-106"/>
</dbReference>
<dbReference type="PDBsum" id="2CQO"/>
<dbReference type="SMR" id="Q9NP64"/>
<dbReference type="BioGRID" id="119598">
    <property type="interactions" value="117"/>
</dbReference>
<dbReference type="FunCoup" id="Q9NP64">
    <property type="interactions" value="1492"/>
</dbReference>
<dbReference type="IntAct" id="Q9NP64">
    <property type="interactions" value="98"/>
</dbReference>
<dbReference type="MINT" id="Q9NP64"/>
<dbReference type="STRING" id="9606.ENSP00000480986"/>
<dbReference type="GlyGen" id="Q9NP64">
    <property type="glycosylation" value="1 site, 1 O-linked glycan (1 site)"/>
</dbReference>
<dbReference type="iPTMnet" id="Q9NP64"/>
<dbReference type="MetOSite" id="Q9NP64"/>
<dbReference type="PhosphoSitePlus" id="Q9NP64"/>
<dbReference type="SwissPalm" id="Q9NP64"/>
<dbReference type="BioMuta" id="ZCCHC17"/>
<dbReference type="DMDM" id="73921227"/>
<dbReference type="jPOST" id="Q9NP64"/>
<dbReference type="MassIVE" id="Q9NP64"/>
<dbReference type="PaxDb" id="9606-ENSP00000480986"/>
<dbReference type="PeptideAtlas" id="Q9NP64"/>
<dbReference type="ProteomicsDB" id="5494"/>
<dbReference type="ProteomicsDB" id="81894">
    <molecule id="Q9NP64-1"/>
</dbReference>
<dbReference type="ProteomicsDB" id="81895">
    <molecule id="Q9NP64-2"/>
</dbReference>
<dbReference type="Pumba" id="Q9NP64"/>
<dbReference type="Antibodypedia" id="31100">
    <property type="antibodies" value="190 antibodies from 23 providers"/>
</dbReference>
<dbReference type="DNASU" id="51538"/>
<dbReference type="Ensembl" id="ENST00000344147.10">
    <molecule id="Q9NP64-1"/>
    <property type="protein sequence ID" value="ENSP00000343557.5"/>
    <property type="gene ID" value="ENSG00000121766.16"/>
</dbReference>
<dbReference type="Ensembl" id="ENST00000373714.5">
    <molecule id="Q9NP64-1"/>
    <property type="protein sequence ID" value="ENSP00000362819.1"/>
    <property type="gene ID" value="ENSG00000121766.16"/>
</dbReference>
<dbReference type="Ensembl" id="ENST00000546109.5">
    <molecule id="Q9NP64-3"/>
    <property type="protein sequence ID" value="ENSP00000444742.1"/>
    <property type="gene ID" value="ENSG00000121766.16"/>
</dbReference>
<dbReference type="GeneID" id="51538"/>
<dbReference type="KEGG" id="hsa:51538"/>
<dbReference type="MANE-Select" id="ENST00000344147.10">
    <property type="protein sequence ID" value="ENSP00000343557.5"/>
    <property type="RefSeq nucleotide sequence ID" value="NM_016505.4"/>
    <property type="RefSeq protein sequence ID" value="NP_057589.2"/>
</dbReference>
<dbReference type="UCSC" id="uc001bsp.3">
    <molecule id="Q9NP64-1"/>
    <property type="organism name" value="human"/>
</dbReference>
<dbReference type="AGR" id="HGNC:30246"/>
<dbReference type="CTD" id="51538"/>
<dbReference type="DisGeNET" id="51538"/>
<dbReference type="GeneCards" id="ZCCHC17"/>
<dbReference type="HGNC" id="HGNC:30246">
    <property type="gene designation" value="ZCCHC17"/>
</dbReference>
<dbReference type="HPA" id="ENSG00000121766">
    <property type="expression patterns" value="Tissue enhanced (brain)"/>
</dbReference>
<dbReference type="MIM" id="619744">
    <property type="type" value="gene"/>
</dbReference>
<dbReference type="neXtProt" id="NX_Q9NP64"/>
<dbReference type="OpenTargets" id="ENSG00000121766"/>
<dbReference type="PharmGKB" id="PA142670539"/>
<dbReference type="VEuPathDB" id="HostDB:ENSG00000121766"/>
<dbReference type="eggNOG" id="KOG0922">
    <property type="taxonomic scope" value="Eukaryota"/>
</dbReference>
<dbReference type="GeneTree" id="ENSGT00510000047363"/>
<dbReference type="InParanoid" id="Q9NP64"/>
<dbReference type="OrthoDB" id="1918363at2759"/>
<dbReference type="PAN-GO" id="Q9NP64">
    <property type="GO annotations" value="2 GO annotations based on evolutionary models"/>
</dbReference>
<dbReference type="PhylomeDB" id="Q9NP64"/>
<dbReference type="TreeFam" id="TF332136"/>
<dbReference type="PathwayCommons" id="Q9NP64"/>
<dbReference type="SignaLink" id="Q9NP64"/>
<dbReference type="BioGRID-ORCS" id="51538">
    <property type="hits" value="5 hits in 1154 CRISPR screens"/>
</dbReference>
<dbReference type="CD-CODE" id="91857CE7">
    <property type="entry name" value="Nucleolus"/>
</dbReference>
<dbReference type="ChiTaRS" id="ZCCHC17">
    <property type="organism name" value="human"/>
</dbReference>
<dbReference type="EvolutionaryTrace" id="Q9NP64"/>
<dbReference type="GeneWiki" id="ZCCHC17"/>
<dbReference type="GenomeRNAi" id="51538"/>
<dbReference type="Pharos" id="Q9NP64">
    <property type="development level" value="Tbio"/>
</dbReference>
<dbReference type="PRO" id="PR:Q9NP64"/>
<dbReference type="Proteomes" id="UP000005640">
    <property type="component" value="Chromosome 1"/>
</dbReference>
<dbReference type="RNAct" id="Q9NP64">
    <property type="molecule type" value="protein"/>
</dbReference>
<dbReference type="Bgee" id="ENSG00000121766">
    <property type="expression patterns" value="Expressed in C1 segment of cervical spinal cord and 184 other cell types or tissues"/>
</dbReference>
<dbReference type="ExpressionAtlas" id="Q9NP64">
    <property type="expression patterns" value="baseline and differential"/>
</dbReference>
<dbReference type="GO" id="GO:0022625">
    <property type="term" value="C:cytosolic large ribosomal subunit"/>
    <property type="evidence" value="ECO:0007669"/>
    <property type="project" value="Ensembl"/>
</dbReference>
<dbReference type="GO" id="GO:0005730">
    <property type="term" value="C:nucleolus"/>
    <property type="evidence" value="ECO:0007669"/>
    <property type="project" value="UniProtKB-SubCell"/>
</dbReference>
<dbReference type="GO" id="GO:0042802">
    <property type="term" value="F:identical protein binding"/>
    <property type="evidence" value="ECO:0000353"/>
    <property type="project" value="IntAct"/>
</dbReference>
<dbReference type="GO" id="GO:0003723">
    <property type="term" value="F:RNA binding"/>
    <property type="evidence" value="ECO:0007005"/>
    <property type="project" value="UniProtKB"/>
</dbReference>
<dbReference type="GO" id="GO:0008270">
    <property type="term" value="F:zinc ion binding"/>
    <property type="evidence" value="ECO:0007669"/>
    <property type="project" value="UniProtKB-KW"/>
</dbReference>
<dbReference type="GO" id="GO:0043489">
    <property type="term" value="P:RNA stabilization"/>
    <property type="evidence" value="ECO:0000318"/>
    <property type="project" value="GO_Central"/>
</dbReference>
<dbReference type="CDD" id="cd05686">
    <property type="entry name" value="S1_pNO40"/>
    <property type="match status" value="1"/>
</dbReference>
<dbReference type="FunFam" id="2.40.50.140:FF:000154">
    <property type="entry name" value="nucleolar protein of 40 kDa"/>
    <property type="match status" value="1"/>
</dbReference>
<dbReference type="Gene3D" id="2.40.50.140">
    <property type="entry name" value="Nucleic acid-binding proteins"/>
    <property type="match status" value="1"/>
</dbReference>
<dbReference type="Gene3D" id="4.10.60.10">
    <property type="entry name" value="Zinc finger, CCHC-type"/>
    <property type="match status" value="1"/>
</dbReference>
<dbReference type="InterPro" id="IPR012340">
    <property type="entry name" value="NA-bd_OB-fold"/>
</dbReference>
<dbReference type="InterPro" id="IPR003029">
    <property type="entry name" value="S1_domain"/>
</dbReference>
<dbReference type="InterPro" id="IPR047913">
    <property type="entry name" value="ZCCHC17_S1"/>
</dbReference>
<dbReference type="InterPro" id="IPR001878">
    <property type="entry name" value="Znf_CCHC"/>
</dbReference>
<dbReference type="PANTHER" id="PTHR15838">
    <property type="entry name" value="NUCLEOLAR PROTEIN OF 40 KDA"/>
    <property type="match status" value="1"/>
</dbReference>
<dbReference type="PANTHER" id="PTHR15838:SF1">
    <property type="entry name" value="ZINC FINGER CCHC DOMAIN-CONTAINING PROTEIN 17"/>
    <property type="match status" value="1"/>
</dbReference>
<dbReference type="Pfam" id="PF00575">
    <property type="entry name" value="S1"/>
    <property type="match status" value="1"/>
</dbReference>
<dbReference type="SMART" id="SM00316">
    <property type="entry name" value="S1"/>
    <property type="match status" value="1"/>
</dbReference>
<dbReference type="SUPFAM" id="SSF50249">
    <property type="entry name" value="Nucleic acid-binding proteins"/>
    <property type="match status" value="1"/>
</dbReference>
<dbReference type="PROSITE" id="PS50126">
    <property type="entry name" value="S1"/>
    <property type="match status" value="1"/>
</dbReference>
<dbReference type="PROSITE" id="PS50158">
    <property type="entry name" value="ZF_CCHC"/>
    <property type="match status" value="1"/>
</dbReference>
<comment type="subunit">
    <text evidence="1">Interacts with PNN. Associates with the 60S ribosomal subunit (By similarity).</text>
</comment>
<comment type="interaction">
    <interactant intactId="EBI-746345">
        <id>Q9NP64</id>
    </interactant>
    <interactant intactId="EBI-541426">
        <id>Q9BXS5</id>
        <label>AP1M1</label>
    </interactant>
    <organismsDiffer>false</organismsDiffer>
    <experiments>7</experiments>
</comment>
<comment type="interaction">
    <interactant intactId="EBI-746345">
        <id>Q9NP64</id>
    </interactant>
    <interactant intactId="EBI-2339219">
        <id>Q08426</id>
        <label>EHHADH</label>
    </interactant>
    <organismsDiffer>false</organismsDiffer>
    <experiments>3</experiments>
</comment>
<comment type="interaction">
    <interactant intactId="EBI-746345">
        <id>Q9NP64</id>
    </interactant>
    <interactant intactId="EBI-348399">
        <id>P22607</id>
        <label>FGFR3</label>
    </interactant>
    <organismsDiffer>false</organismsDiffer>
    <experiments>3</experiments>
</comment>
<comment type="interaction">
    <interactant intactId="EBI-746345">
        <id>Q9NP64</id>
    </interactant>
    <interactant intactId="EBI-8285963">
        <id>Q14957</id>
        <label>GRIN2C</label>
    </interactant>
    <organismsDiffer>false</organismsDiffer>
    <experiments>3</experiments>
</comment>
<comment type="interaction">
    <interactant intactId="EBI-746345">
        <id>Q9NP64</id>
    </interactant>
    <interactant intactId="EBI-351506">
        <id>P06396</id>
        <label>GSN</label>
    </interactant>
    <organismsDiffer>false</organismsDiffer>
    <experiments>3</experiments>
</comment>
<comment type="interaction">
    <interactant intactId="EBI-746345">
        <id>Q9NP64</id>
    </interactant>
    <interactant intactId="EBI-8464037">
        <id>Q6NYC1</id>
        <label>JMJD6</label>
    </interactant>
    <organismsDiffer>false</organismsDiffer>
    <experiments>6</experiments>
</comment>
<comment type="interaction">
    <interactant intactId="EBI-746345">
        <id>Q9NP64</id>
    </interactant>
    <interactant intactId="EBI-1044504">
        <id>Q9BS40</id>
        <label>LXN</label>
    </interactant>
    <organismsDiffer>false</organismsDiffer>
    <experiments>3</experiments>
</comment>
<comment type="interaction">
    <interactant intactId="EBI-746345">
        <id>Q9NP64</id>
    </interactant>
    <interactant intactId="EBI-741158">
        <id>Q96HA8</id>
        <label>NTAQ1</label>
    </interactant>
    <organismsDiffer>false</organismsDiffer>
    <experiments>3</experiments>
</comment>
<comment type="interaction">
    <interactant intactId="EBI-746345">
        <id>Q9NP64</id>
    </interactant>
    <interactant intactId="EBI-2340927">
        <id>P78317</id>
        <label>RNF4</label>
    </interactant>
    <organismsDiffer>false</organismsDiffer>
    <experiments>3</experiments>
</comment>
<comment type="interaction">
    <interactant intactId="EBI-746345">
        <id>Q9NP64</id>
    </interactant>
    <interactant intactId="EBI-727004">
        <id>O00560</id>
        <label>SDCBP</label>
    </interactant>
    <organismsDiffer>false</organismsDiffer>
    <experiments>8</experiments>
</comment>
<comment type="interaction">
    <interactant intactId="EBI-746345">
        <id>Q9NP64</id>
    </interactant>
    <interactant intactId="EBI-742426">
        <id>Q9H190</id>
        <label>SDCBP2</label>
    </interactant>
    <organismsDiffer>false</organismsDiffer>
    <experiments>8</experiments>
</comment>
<comment type="interaction">
    <interactant intactId="EBI-746345">
        <id>Q9NP64</id>
    </interactant>
    <interactant intactId="EBI-12097232">
        <id>A0MZ66-4</id>
        <label>SHTN1</label>
    </interactant>
    <organismsDiffer>false</organismsDiffer>
    <experiments>3</experiments>
</comment>
<comment type="interaction">
    <interactant intactId="EBI-746345">
        <id>Q9NP64</id>
    </interactant>
    <interactant intactId="EBI-741480">
        <id>Q9UMX0</id>
        <label>UBQLN1</label>
    </interactant>
    <organismsDiffer>false</organismsDiffer>
    <experiments>3</experiments>
</comment>
<comment type="interaction">
    <interactant intactId="EBI-746345">
        <id>Q9NP64</id>
    </interactant>
    <interactant intactId="EBI-746345">
        <id>Q9NP64</id>
        <label>ZCCHC17</label>
    </interactant>
    <organismsDiffer>false</organismsDiffer>
    <experiments>3</experiments>
</comment>
<comment type="interaction">
    <interactant intactId="EBI-746345">
        <id>Q9NP64</id>
    </interactant>
    <interactant intactId="EBI-3921553">
        <id>P17020</id>
        <label>ZNF16</label>
    </interactant>
    <organismsDiffer>false</organismsDiffer>
    <experiments>3</experiments>
</comment>
<comment type="interaction">
    <interactant intactId="EBI-746345">
        <id>Q9NP64</id>
    </interactant>
    <interactant intactId="EBI-25900580">
        <id>Q9Y649</id>
    </interactant>
    <organismsDiffer>false</organismsDiffer>
    <experiments>3</experiments>
</comment>
<comment type="subcellular location">
    <subcellularLocation>
        <location evidence="6">Nucleus</location>
        <location evidence="6">Nucleolus</location>
    </subcellularLocation>
</comment>
<comment type="alternative products">
    <event type="alternative splicing"/>
    <isoform>
        <id>Q9NP64-1</id>
        <name>1</name>
        <name>hpNO40</name>
        <sequence type="displayed"/>
    </isoform>
    <isoform>
        <id>Q9NP64-2</id>
        <name>2</name>
        <name>hpNO40s</name>
        <sequence type="described" ref="VSP_015308"/>
    </isoform>
    <isoform>
        <id>Q9NP64-3</id>
        <name>3</name>
        <sequence type="described" ref="VSP_054531"/>
    </isoform>
</comment>
<comment type="sequence caution" evidence="9">
    <conflict type="frameshift">
        <sequence resource="EMBL-CDS" id="AAF36171"/>
    </conflict>
</comment>
<reference key="1">
    <citation type="journal article" date="2003" name="Biochem. Biophys. Res. Commun.">
        <title>Molecular characterization of a novel nucleolar protein, pNO40.</title>
        <authorList>
            <person name="Chang W.-L."/>
            <person name="Lee D.-C."/>
            <person name="Leu S."/>
            <person name="Huang Y.-M."/>
            <person name="Lu M.-C."/>
            <person name="Ouyang P."/>
        </authorList>
    </citation>
    <scope>NUCLEOTIDE SEQUENCE [MRNA] (ISOFORMS 1 AND 2)</scope>
    <scope>ALTERNATIVE SPLICING</scope>
    <scope>SUBCELLULAR LOCATION</scope>
    <scope>INTERACTION WITH PNN</scope>
    <source>
        <tissue>Kidney</tissue>
    </source>
</reference>
<reference key="2">
    <citation type="journal article" date="2000" name="Genome Res.">
        <title>Cloning and functional analysis of cDNAs with open reading frames for 300 previously undefined genes expressed in CD34+ hematopoietic stem/progenitor cells.</title>
        <authorList>
            <person name="Zhang Q.-H."/>
            <person name="Ye M."/>
            <person name="Wu X.-Y."/>
            <person name="Ren S.-X."/>
            <person name="Zhao M."/>
            <person name="Zhao C.-J."/>
            <person name="Fu G."/>
            <person name="Shen Y."/>
            <person name="Fan H.-Y."/>
            <person name="Lu G."/>
            <person name="Zhong M."/>
            <person name="Xu X.-R."/>
            <person name="Han Z.-G."/>
            <person name="Zhang J.-W."/>
            <person name="Tao J."/>
            <person name="Huang Q.-H."/>
            <person name="Zhou J."/>
            <person name="Hu G.-X."/>
            <person name="Gu J."/>
            <person name="Chen S.-J."/>
            <person name="Chen Z."/>
        </authorList>
    </citation>
    <scope>NUCLEOTIDE SEQUENCE [LARGE SCALE MRNA] (ISOFORM 1)</scope>
    <source>
        <tissue>Umbilical cord blood</tissue>
    </source>
</reference>
<reference key="3">
    <citation type="journal article" date="2004" name="Nat. Genet.">
        <title>Complete sequencing and characterization of 21,243 full-length human cDNAs.</title>
        <authorList>
            <person name="Ota T."/>
            <person name="Suzuki Y."/>
            <person name="Nishikawa T."/>
            <person name="Otsuki T."/>
            <person name="Sugiyama T."/>
            <person name="Irie R."/>
            <person name="Wakamatsu A."/>
            <person name="Hayashi K."/>
            <person name="Sato H."/>
            <person name="Nagai K."/>
            <person name="Kimura K."/>
            <person name="Makita H."/>
            <person name="Sekine M."/>
            <person name="Obayashi M."/>
            <person name="Nishi T."/>
            <person name="Shibahara T."/>
            <person name="Tanaka T."/>
            <person name="Ishii S."/>
            <person name="Yamamoto J."/>
            <person name="Saito K."/>
            <person name="Kawai Y."/>
            <person name="Isono Y."/>
            <person name="Nakamura Y."/>
            <person name="Nagahari K."/>
            <person name="Murakami K."/>
            <person name="Yasuda T."/>
            <person name="Iwayanagi T."/>
            <person name="Wagatsuma M."/>
            <person name="Shiratori A."/>
            <person name="Sudo H."/>
            <person name="Hosoiri T."/>
            <person name="Kaku Y."/>
            <person name="Kodaira H."/>
            <person name="Kondo H."/>
            <person name="Sugawara M."/>
            <person name="Takahashi M."/>
            <person name="Kanda K."/>
            <person name="Yokoi T."/>
            <person name="Furuya T."/>
            <person name="Kikkawa E."/>
            <person name="Omura Y."/>
            <person name="Abe K."/>
            <person name="Kamihara K."/>
            <person name="Katsuta N."/>
            <person name="Sato K."/>
            <person name="Tanikawa M."/>
            <person name="Yamazaki M."/>
            <person name="Ninomiya K."/>
            <person name="Ishibashi T."/>
            <person name="Yamashita H."/>
            <person name="Murakawa K."/>
            <person name="Fujimori K."/>
            <person name="Tanai H."/>
            <person name="Kimata M."/>
            <person name="Watanabe M."/>
            <person name="Hiraoka S."/>
            <person name="Chiba Y."/>
            <person name="Ishida S."/>
            <person name="Ono Y."/>
            <person name="Takiguchi S."/>
            <person name="Watanabe S."/>
            <person name="Yosida M."/>
            <person name="Hotuta T."/>
            <person name="Kusano J."/>
            <person name="Kanehori K."/>
            <person name="Takahashi-Fujii A."/>
            <person name="Hara H."/>
            <person name="Tanase T.-O."/>
            <person name="Nomura Y."/>
            <person name="Togiya S."/>
            <person name="Komai F."/>
            <person name="Hara R."/>
            <person name="Takeuchi K."/>
            <person name="Arita M."/>
            <person name="Imose N."/>
            <person name="Musashino K."/>
            <person name="Yuuki H."/>
            <person name="Oshima A."/>
            <person name="Sasaki N."/>
            <person name="Aotsuka S."/>
            <person name="Yoshikawa Y."/>
            <person name="Matsunawa H."/>
            <person name="Ichihara T."/>
            <person name="Shiohata N."/>
            <person name="Sano S."/>
            <person name="Moriya S."/>
            <person name="Momiyama H."/>
            <person name="Satoh N."/>
            <person name="Takami S."/>
            <person name="Terashima Y."/>
            <person name="Suzuki O."/>
            <person name="Nakagawa S."/>
            <person name="Senoh A."/>
            <person name="Mizoguchi H."/>
            <person name="Goto Y."/>
            <person name="Shimizu F."/>
            <person name="Wakebe H."/>
            <person name="Hishigaki H."/>
            <person name="Watanabe T."/>
            <person name="Sugiyama A."/>
            <person name="Takemoto M."/>
            <person name="Kawakami B."/>
            <person name="Yamazaki M."/>
            <person name="Watanabe K."/>
            <person name="Kumagai A."/>
            <person name="Itakura S."/>
            <person name="Fukuzumi Y."/>
            <person name="Fujimori Y."/>
            <person name="Komiyama M."/>
            <person name="Tashiro H."/>
            <person name="Tanigami A."/>
            <person name="Fujiwara T."/>
            <person name="Ono T."/>
            <person name="Yamada K."/>
            <person name="Fujii Y."/>
            <person name="Ozaki K."/>
            <person name="Hirao M."/>
            <person name="Ohmori Y."/>
            <person name="Kawabata A."/>
            <person name="Hikiji T."/>
            <person name="Kobatake N."/>
            <person name="Inagaki H."/>
            <person name="Ikema Y."/>
            <person name="Okamoto S."/>
            <person name="Okitani R."/>
            <person name="Kawakami T."/>
            <person name="Noguchi S."/>
            <person name="Itoh T."/>
            <person name="Shigeta K."/>
            <person name="Senba T."/>
            <person name="Matsumura K."/>
            <person name="Nakajima Y."/>
            <person name="Mizuno T."/>
            <person name="Morinaga M."/>
            <person name="Sasaki M."/>
            <person name="Togashi T."/>
            <person name="Oyama M."/>
            <person name="Hata H."/>
            <person name="Watanabe M."/>
            <person name="Komatsu T."/>
            <person name="Mizushima-Sugano J."/>
            <person name="Satoh T."/>
            <person name="Shirai Y."/>
            <person name="Takahashi Y."/>
            <person name="Nakagawa K."/>
            <person name="Okumura K."/>
            <person name="Nagase T."/>
            <person name="Nomura N."/>
            <person name="Kikuchi H."/>
            <person name="Masuho Y."/>
            <person name="Yamashita R."/>
            <person name="Nakai K."/>
            <person name="Yada T."/>
            <person name="Nakamura Y."/>
            <person name="Ohara O."/>
            <person name="Isogai T."/>
            <person name="Sugano S."/>
        </authorList>
    </citation>
    <scope>NUCLEOTIDE SEQUENCE [LARGE SCALE MRNA] (ISOFORMS 1 AND 3)</scope>
    <source>
        <tissue>Placenta</tissue>
        <tissue>Retinoblastoma</tissue>
        <tissue>Teratocarcinoma</tissue>
        <tissue>Testis</tissue>
    </source>
</reference>
<reference key="4">
    <citation type="journal article" date="2006" name="Nature">
        <title>The DNA sequence and biological annotation of human chromosome 1.</title>
        <authorList>
            <person name="Gregory S.G."/>
            <person name="Barlow K.F."/>
            <person name="McLay K.E."/>
            <person name="Kaul R."/>
            <person name="Swarbreck D."/>
            <person name="Dunham A."/>
            <person name="Scott C.E."/>
            <person name="Howe K.L."/>
            <person name="Woodfine K."/>
            <person name="Spencer C.C.A."/>
            <person name="Jones M.C."/>
            <person name="Gillson C."/>
            <person name="Searle S."/>
            <person name="Zhou Y."/>
            <person name="Kokocinski F."/>
            <person name="McDonald L."/>
            <person name="Evans R."/>
            <person name="Phillips K."/>
            <person name="Atkinson A."/>
            <person name="Cooper R."/>
            <person name="Jones C."/>
            <person name="Hall R.E."/>
            <person name="Andrews T.D."/>
            <person name="Lloyd C."/>
            <person name="Ainscough R."/>
            <person name="Almeida J.P."/>
            <person name="Ambrose K.D."/>
            <person name="Anderson F."/>
            <person name="Andrew R.W."/>
            <person name="Ashwell R.I.S."/>
            <person name="Aubin K."/>
            <person name="Babbage A.K."/>
            <person name="Bagguley C.L."/>
            <person name="Bailey J."/>
            <person name="Beasley H."/>
            <person name="Bethel G."/>
            <person name="Bird C.P."/>
            <person name="Bray-Allen S."/>
            <person name="Brown J.Y."/>
            <person name="Brown A.J."/>
            <person name="Buckley D."/>
            <person name="Burton J."/>
            <person name="Bye J."/>
            <person name="Carder C."/>
            <person name="Chapman J.C."/>
            <person name="Clark S.Y."/>
            <person name="Clarke G."/>
            <person name="Clee C."/>
            <person name="Cobley V."/>
            <person name="Collier R.E."/>
            <person name="Corby N."/>
            <person name="Coville G.J."/>
            <person name="Davies J."/>
            <person name="Deadman R."/>
            <person name="Dunn M."/>
            <person name="Earthrowl M."/>
            <person name="Ellington A.G."/>
            <person name="Errington H."/>
            <person name="Frankish A."/>
            <person name="Frankland J."/>
            <person name="French L."/>
            <person name="Garner P."/>
            <person name="Garnett J."/>
            <person name="Gay L."/>
            <person name="Ghori M.R.J."/>
            <person name="Gibson R."/>
            <person name="Gilby L.M."/>
            <person name="Gillett W."/>
            <person name="Glithero R.J."/>
            <person name="Grafham D.V."/>
            <person name="Griffiths C."/>
            <person name="Griffiths-Jones S."/>
            <person name="Grocock R."/>
            <person name="Hammond S."/>
            <person name="Harrison E.S.I."/>
            <person name="Hart E."/>
            <person name="Haugen E."/>
            <person name="Heath P.D."/>
            <person name="Holmes S."/>
            <person name="Holt K."/>
            <person name="Howden P.J."/>
            <person name="Hunt A.R."/>
            <person name="Hunt S.E."/>
            <person name="Hunter G."/>
            <person name="Isherwood J."/>
            <person name="James R."/>
            <person name="Johnson C."/>
            <person name="Johnson D."/>
            <person name="Joy A."/>
            <person name="Kay M."/>
            <person name="Kershaw J.K."/>
            <person name="Kibukawa M."/>
            <person name="Kimberley A.M."/>
            <person name="King A."/>
            <person name="Knights A.J."/>
            <person name="Lad H."/>
            <person name="Laird G."/>
            <person name="Lawlor S."/>
            <person name="Leongamornlert D.A."/>
            <person name="Lloyd D.M."/>
            <person name="Loveland J."/>
            <person name="Lovell J."/>
            <person name="Lush M.J."/>
            <person name="Lyne R."/>
            <person name="Martin S."/>
            <person name="Mashreghi-Mohammadi M."/>
            <person name="Matthews L."/>
            <person name="Matthews N.S.W."/>
            <person name="McLaren S."/>
            <person name="Milne S."/>
            <person name="Mistry S."/>
            <person name="Moore M.J.F."/>
            <person name="Nickerson T."/>
            <person name="O'Dell C.N."/>
            <person name="Oliver K."/>
            <person name="Palmeiri A."/>
            <person name="Palmer S.A."/>
            <person name="Parker A."/>
            <person name="Patel D."/>
            <person name="Pearce A.V."/>
            <person name="Peck A.I."/>
            <person name="Pelan S."/>
            <person name="Phelps K."/>
            <person name="Phillimore B.J."/>
            <person name="Plumb R."/>
            <person name="Rajan J."/>
            <person name="Raymond C."/>
            <person name="Rouse G."/>
            <person name="Saenphimmachak C."/>
            <person name="Sehra H.K."/>
            <person name="Sheridan E."/>
            <person name="Shownkeen R."/>
            <person name="Sims S."/>
            <person name="Skuce C.D."/>
            <person name="Smith M."/>
            <person name="Steward C."/>
            <person name="Subramanian S."/>
            <person name="Sycamore N."/>
            <person name="Tracey A."/>
            <person name="Tromans A."/>
            <person name="Van Helmond Z."/>
            <person name="Wall M."/>
            <person name="Wallis J.M."/>
            <person name="White S."/>
            <person name="Whitehead S.L."/>
            <person name="Wilkinson J.E."/>
            <person name="Willey D.L."/>
            <person name="Williams H."/>
            <person name="Wilming L."/>
            <person name="Wray P.W."/>
            <person name="Wu Z."/>
            <person name="Coulson A."/>
            <person name="Vaudin M."/>
            <person name="Sulston J.E."/>
            <person name="Durbin R.M."/>
            <person name="Hubbard T."/>
            <person name="Wooster R."/>
            <person name="Dunham I."/>
            <person name="Carter N.P."/>
            <person name="McVean G."/>
            <person name="Ross M.T."/>
            <person name="Harrow J."/>
            <person name="Olson M.V."/>
            <person name="Beck S."/>
            <person name="Rogers J."/>
            <person name="Bentley D.R."/>
        </authorList>
    </citation>
    <scope>NUCLEOTIDE SEQUENCE [LARGE SCALE GENOMIC DNA]</scope>
</reference>
<reference key="5">
    <citation type="submission" date="2005-09" db="EMBL/GenBank/DDBJ databases">
        <authorList>
            <person name="Mural R.J."/>
            <person name="Istrail S."/>
            <person name="Sutton G.G."/>
            <person name="Florea L."/>
            <person name="Halpern A.L."/>
            <person name="Mobarry C.M."/>
            <person name="Lippert R."/>
            <person name="Walenz B."/>
            <person name="Shatkay H."/>
            <person name="Dew I."/>
            <person name="Miller J.R."/>
            <person name="Flanigan M.J."/>
            <person name="Edwards N.J."/>
            <person name="Bolanos R."/>
            <person name="Fasulo D."/>
            <person name="Halldorsson B.V."/>
            <person name="Hannenhalli S."/>
            <person name="Turner R."/>
            <person name="Yooseph S."/>
            <person name="Lu F."/>
            <person name="Nusskern D.R."/>
            <person name="Shue B.C."/>
            <person name="Zheng X.H."/>
            <person name="Zhong F."/>
            <person name="Delcher A.L."/>
            <person name="Huson D.H."/>
            <person name="Kravitz S.A."/>
            <person name="Mouchard L."/>
            <person name="Reinert K."/>
            <person name="Remington K.A."/>
            <person name="Clark A.G."/>
            <person name="Waterman M.S."/>
            <person name="Eichler E.E."/>
            <person name="Adams M.D."/>
            <person name="Hunkapiller M.W."/>
            <person name="Myers E.W."/>
            <person name="Venter J.C."/>
        </authorList>
    </citation>
    <scope>NUCLEOTIDE SEQUENCE [LARGE SCALE GENOMIC DNA]</scope>
</reference>
<reference key="6">
    <citation type="journal article" date="2004" name="Genome Res.">
        <title>The status, quality, and expansion of the NIH full-length cDNA project: the Mammalian Gene Collection (MGC).</title>
        <authorList>
            <consortium name="The MGC Project Team"/>
        </authorList>
    </citation>
    <scope>NUCLEOTIDE SEQUENCE [LARGE SCALE MRNA] (ISOFORM 1)</scope>
    <source>
        <tissue>Kidney</tissue>
        <tissue>Muscle</tissue>
        <tissue>Uterus</tissue>
    </source>
</reference>
<reference key="7">
    <citation type="journal article" date="2008" name="Proc. Natl. Acad. Sci. U.S.A.">
        <title>A quantitative atlas of mitotic phosphorylation.</title>
        <authorList>
            <person name="Dephoure N."/>
            <person name="Zhou C."/>
            <person name="Villen J."/>
            <person name="Beausoleil S.A."/>
            <person name="Bakalarski C.E."/>
            <person name="Elledge S.J."/>
            <person name="Gygi S.P."/>
        </authorList>
    </citation>
    <scope>PHOSPHORYLATION [LARGE SCALE ANALYSIS] AT SER-114</scope>
    <scope>IDENTIFICATION BY MASS SPECTROMETRY [LARGE SCALE ANALYSIS]</scope>
    <source>
        <tissue>Cervix carcinoma</tissue>
    </source>
</reference>
<reference key="8">
    <citation type="journal article" date="2010" name="Sci. Signal.">
        <title>Quantitative phosphoproteomics reveals widespread full phosphorylation site occupancy during mitosis.</title>
        <authorList>
            <person name="Olsen J.V."/>
            <person name="Vermeulen M."/>
            <person name="Santamaria A."/>
            <person name="Kumar C."/>
            <person name="Miller M.L."/>
            <person name="Jensen L.J."/>
            <person name="Gnad F."/>
            <person name="Cox J."/>
            <person name="Jensen T.S."/>
            <person name="Nigg E.A."/>
            <person name="Brunak S."/>
            <person name="Mann M."/>
        </authorList>
    </citation>
    <scope>PHOSPHORYLATION [LARGE SCALE ANALYSIS] AT SER-114</scope>
    <scope>IDENTIFICATION BY MASS SPECTROMETRY [LARGE SCALE ANALYSIS]</scope>
    <source>
        <tissue>Cervix carcinoma</tissue>
    </source>
</reference>
<reference key="9">
    <citation type="journal article" date="2011" name="Sci. Signal.">
        <title>System-wide temporal characterization of the proteome and phosphoproteome of human embryonic stem cell differentiation.</title>
        <authorList>
            <person name="Rigbolt K.T."/>
            <person name="Prokhorova T.A."/>
            <person name="Akimov V."/>
            <person name="Henningsen J."/>
            <person name="Johansen P.T."/>
            <person name="Kratchmarova I."/>
            <person name="Kassem M."/>
            <person name="Mann M."/>
            <person name="Olsen J.V."/>
            <person name="Blagoev B."/>
        </authorList>
    </citation>
    <scope>PHOSPHORYLATION [LARGE SCALE ANALYSIS] AT SER-114</scope>
    <scope>IDENTIFICATION BY MASS SPECTROMETRY [LARGE SCALE ANALYSIS]</scope>
</reference>
<reference key="10">
    <citation type="journal article" date="2013" name="J. Proteome Res.">
        <title>Toward a comprehensive characterization of a human cancer cell phosphoproteome.</title>
        <authorList>
            <person name="Zhou H."/>
            <person name="Di Palma S."/>
            <person name="Preisinger C."/>
            <person name="Peng M."/>
            <person name="Polat A.N."/>
            <person name="Heck A.J."/>
            <person name="Mohammed S."/>
        </authorList>
    </citation>
    <scope>PHOSPHORYLATION [LARGE SCALE ANALYSIS] AT SER-114 AND SER-183</scope>
    <scope>IDENTIFICATION BY MASS SPECTROMETRY [LARGE SCALE ANALYSIS]</scope>
    <source>
        <tissue>Cervix carcinoma</tissue>
        <tissue>Erythroleukemia</tissue>
    </source>
</reference>
<reference key="11">
    <citation type="submission" date="2005-11" db="PDB data bank">
        <title>Solution structure of the S1 RNA binding domain of human hypothetical protein FLJ11067.</title>
        <authorList>
            <consortium name="RIKEN structural genomics initiative (RSGI)"/>
        </authorList>
    </citation>
    <scope>STRUCTURE BY NMR OF 1-106</scope>
</reference>
<gene>
    <name type="primary">ZCCHC17</name>
    <name type="synonym">PS1D</name>
    <name type="ORF">HSPC243</name>
    <name type="ORF">HSPC251</name>
    <name type="ORF">LDC4</name>
</gene>
<evidence type="ECO:0000250" key="1"/>
<evidence type="ECO:0000250" key="2">
    <source>
        <dbReference type="UniProtKB" id="Q9ESX4"/>
    </source>
</evidence>
<evidence type="ECO:0000255" key="3">
    <source>
        <dbReference type="PROSITE-ProRule" id="PRU00047"/>
    </source>
</evidence>
<evidence type="ECO:0000255" key="4">
    <source>
        <dbReference type="PROSITE-ProRule" id="PRU00180"/>
    </source>
</evidence>
<evidence type="ECO:0000256" key="5">
    <source>
        <dbReference type="SAM" id="MobiDB-lite"/>
    </source>
</evidence>
<evidence type="ECO:0000269" key="6">
    <source>
    </source>
</evidence>
<evidence type="ECO:0000303" key="7">
    <source>
    </source>
</evidence>
<evidence type="ECO:0000303" key="8">
    <source>
    </source>
</evidence>
<evidence type="ECO:0000305" key="9"/>
<evidence type="ECO:0007744" key="10">
    <source>
    </source>
</evidence>
<evidence type="ECO:0007744" key="11">
    <source>
    </source>
</evidence>
<evidence type="ECO:0007744" key="12">
    <source>
    </source>
</evidence>
<evidence type="ECO:0007744" key="13">
    <source>
    </source>
</evidence>
<evidence type="ECO:0007829" key="14">
    <source>
        <dbReference type="PDB" id="2CQO"/>
    </source>
</evidence>
<protein>
    <recommendedName>
        <fullName>Zinc finger CCHC domain-containing protein 17</fullName>
    </recommendedName>
    <alternativeName>
        <fullName evidence="7">Nucleolar protein of 40 kDa</fullName>
        <shortName evidence="7">pNO40</shortName>
    </alternativeName>
    <alternativeName>
        <fullName>Pnn-interacting nucleolar protein</fullName>
    </alternativeName>
    <alternativeName>
        <fullName>Putative S1 RNA-binding domain protein</fullName>
        <shortName>PS1D protein</shortName>
    </alternativeName>
</protein>
<proteinExistence type="evidence at protein level"/>
<name>ZCC17_HUMAN</name>
<feature type="chain" id="PRO_0000096902" description="Zinc finger CCHC domain-containing protein 17">
    <location>
        <begin position="1"/>
        <end position="241"/>
    </location>
</feature>
<feature type="domain" description="S1 motif" evidence="4">
    <location>
        <begin position="16"/>
        <end position="88"/>
    </location>
</feature>
<feature type="zinc finger region" description="CCHC-type" evidence="3">
    <location>
        <begin position="131"/>
        <end position="148"/>
    </location>
</feature>
<feature type="region of interest" description="Disordered" evidence="5">
    <location>
        <begin position="161"/>
        <end position="241"/>
    </location>
</feature>
<feature type="compositionally biased region" description="Basic and acidic residues" evidence="5">
    <location>
        <begin position="166"/>
        <end position="178"/>
    </location>
</feature>
<feature type="compositionally biased region" description="Basic residues" evidence="5">
    <location>
        <begin position="182"/>
        <end position="198"/>
    </location>
</feature>
<feature type="compositionally biased region" description="Basic and acidic residues" evidence="5">
    <location>
        <begin position="211"/>
        <end position="225"/>
    </location>
</feature>
<feature type="compositionally biased region" description="Basic residues" evidence="5">
    <location>
        <begin position="226"/>
        <end position="241"/>
    </location>
</feature>
<feature type="modified residue" description="Phosphoserine" evidence="10 11 12 13">
    <location>
        <position position="114"/>
    </location>
</feature>
<feature type="modified residue" description="N6-acetyllysine" evidence="2">
    <location>
        <position position="144"/>
    </location>
</feature>
<feature type="modified residue" description="Phosphoserine" evidence="13">
    <location>
        <position position="183"/>
    </location>
</feature>
<feature type="splice variant" id="VSP_015308" description="In isoform 2." evidence="7">
    <location>
        <begin position="1"/>
        <end position="24"/>
    </location>
</feature>
<feature type="splice variant" id="VSP_054531" description="In isoform 3." evidence="8">
    <original>MNSGRPETMENLPALYTIFQGE</original>
    <variation>MKQLIEDTEKNKVY</variation>
    <location>
        <begin position="1"/>
        <end position="22"/>
    </location>
</feature>
<feature type="sequence conflict" description="In Ref. 2; AAF36171." evidence="9" ref="2">
    <original>R</original>
    <variation>G</variation>
    <location>
        <position position="217"/>
    </location>
</feature>
<feature type="strand" evidence="14">
    <location>
        <begin position="18"/>
        <end position="27"/>
    </location>
</feature>
<feature type="strand" evidence="14">
    <location>
        <begin position="30"/>
        <end position="34"/>
    </location>
</feature>
<feature type="strand" evidence="14">
    <location>
        <begin position="42"/>
        <end position="45"/>
    </location>
</feature>
<feature type="helix" evidence="14">
    <location>
        <begin position="46"/>
        <end position="49"/>
    </location>
</feature>
<feature type="helix" evidence="14">
    <location>
        <begin position="57"/>
        <end position="60"/>
    </location>
</feature>
<feature type="strand" evidence="14">
    <location>
        <begin position="66"/>
        <end position="76"/>
    </location>
</feature>
<feature type="strand" evidence="14">
    <location>
        <begin position="81"/>
        <end position="87"/>
    </location>
</feature>
<feature type="strand" evidence="14">
    <location>
        <begin position="92"/>
        <end position="94"/>
    </location>
</feature>
<keyword id="KW-0002">3D-structure</keyword>
<keyword id="KW-0007">Acetylation</keyword>
<keyword id="KW-0025">Alternative splicing</keyword>
<keyword id="KW-0479">Metal-binding</keyword>
<keyword id="KW-0539">Nucleus</keyword>
<keyword id="KW-0597">Phosphoprotein</keyword>
<keyword id="KW-1267">Proteomics identification</keyword>
<keyword id="KW-1185">Reference proteome</keyword>
<keyword id="KW-0687">Ribonucleoprotein</keyword>
<keyword id="KW-0862">Zinc</keyword>
<keyword id="KW-0863">Zinc-finger</keyword>
<sequence>MNSGRPETMENLPALYTIFQGEVAMVTDYGAFIKIPGCRKQGLVHRTHMSSCRVDKPSEIVDVGDKVWVKLIGREMKNDRIKVSLSMKVVNQGTGKDLDPNNVIIEQEERRRRSFQDYTGQKITLEAVLNTTCKKCGCKGHFAKDCFMQPGGTKYSLIPDEEEEKEEAKSAEFEKPDPTRNPSRKRKKEKKKKKHRDRKSSDSDSSDSESDTGKRARHTSKDSKAAKKKKKKKKHKKKHKE</sequence>
<accession>Q9NP64</accession>
<accession>B4DY38</accession>
<accession>D3DPN4</accession>
<accession>Q6PKH4</accession>
<accession>Q9NYG4</accession>
<accession>Q9P0M8</accession>
<organism>
    <name type="scientific">Homo sapiens</name>
    <name type="common">Human</name>
    <dbReference type="NCBI Taxonomy" id="9606"/>
    <lineage>
        <taxon>Eukaryota</taxon>
        <taxon>Metazoa</taxon>
        <taxon>Chordata</taxon>
        <taxon>Craniata</taxon>
        <taxon>Vertebrata</taxon>
        <taxon>Euteleostomi</taxon>
        <taxon>Mammalia</taxon>
        <taxon>Eutheria</taxon>
        <taxon>Euarchontoglires</taxon>
        <taxon>Primates</taxon>
        <taxon>Haplorrhini</taxon>
        <taxon>Catarrhini</taxon>
        <taxon>Hominidae</taxon>
        <taxon>Homo</taxon>
    </lineage>
</organism>